<sequence>MSFVLAIDQGTTSSRAMVFRSDISIAAVAQQEFPQHFPASGWVEHEPEDIWTSTVMTCRDALEKAGLAAKDIAAIGITNQRETTVVWDRATGQAVHRAIVWQDRRTADICAKLKAEGHEPDVSARTGLIIDPYFSGTKVAWILDHVPGARERAERGELLFGTVDCYLLWRLTGGRVHATDATNASRTLLFNIHTGQWDDTLLKLLRVPRSMLPEVKDSSADFGTTTPDLFGGPIKVAGIAGDQQAATIGQACFTPGMMKSTYGTGCFALLNTGATPVKSNNKLLTTIAYQLNGIRTYALEGSIFVAGSAVQWLRDGLGIIKHAAETGPLADKSDSMQSVYLVPAFVGLGAPYWNPRVRGALFGLTRNTGPAELAHATLESVCYQTYDLWAAMRADWPDASAATIVLRVDGGMTASDWTMQRLADLLDAPVDRPMIQETTALGAAYLAGLNAGVYPEPEKFADNWRLEHRFRPAMSAATRQRKLAGWARAVKGVLASDEGE</sequence>
<feature type="chain" id="PRO_1000020707" description="Glycerol kinase">
    <location>
        <begin position="1"/>
        <end position="500"/>
    </location>
</feature>
<feature type="binding site" evidence="1">
    <location>
        <position position="11"/>
    </location>
    <ligand>
        <name>ADP</name>
        <dbReference type="ChEBI" id="CHEBI:456216"/>
    </ligand>
</feature>
<feature type="binding site" evidence="1">
    <location>
        <position position="11"/>
    </location>
    <ligand>
        <name>ATP</name>
        <dbReference type="ChEBI" id="CHEBI:30616"/>
    </ligand>
</feature>
<feature type="binding site" evidence="1">
    <location>
        <position position="11"/>
    </location>
    <ligand>
        <name>sn-glycerol 3-phosphate</name>
        <dbReference type="ChEBI" id="CHEBI:57597"/>
    </ligand>
</feature>
<feature type="binding site" evidence="1">
    <location>
        <position position="12"/>
    </location>
    <ligand>
        <name>ATP</name>
        <dbReference type="ChEBI" id="CHEBI:30616"/>
    </ligand>
</feature>
<feature type="binding site" evidence="1">
    <location>
        <position position="13"/>
    </location>
    <ligand>
        <name>ATP</name>
        <dbReference type="ChEBI" id="CHEBI:30616"/>
    </ligand>
</feature>
<feature type="binding site" evidence="1">
    <location>
        <position position="15"/>
    </location>
    <ligand>
        <name>ADP</name>
        <dbReference type="ChEBI" id="CHEBI:456216"/>
    </ligand>
</feature>
<feature type="binding site" evidence="1">
    <location>
        <position position="81"/>
    </location>
    <ligand>
        <name>glycerol</name>
        <dbReference type="ChEBI" id="CHEBI:17754"/>
    </ligand>
</feature>
<feature type="binding site" evidence="1">
    <location>
        <position position="81"/>
    </location>
    <ligand>
        <name>sn-glycerol 3-phosphate</name>
        <dbReference type="ChEBI" id="CHEBI:57597"/>
    </ligand>
</feature>
<feature type="binding site" evidence="1">
    <location>
        <position position="82"/>
    </location>
    <ligand>
        <name>glycerol</name>
        <dbReference type="ChEBI" id="CHEBI:17754"/>
    </ligand>
</feature>
<feature type="binding site" evidence="1">
    <location>
        <position position="82"/>
    </location>
    <ligand>
        <name>sn-glycerol 3-phosphate</name>
        <dbReference type="ChEBI" id="CHEBI:57597"/>
    </ligand>
</feature>
<feature type="binding site" evidence="1">
    <location>
        <position position="133"/>
    </location>
    <ligand>
        <name>glycerol</name>
        <dbReference type="ChEBI" id="CHEBI:17754"/>
    </ligand>
</feature>
<feature type="binding site" evidence="1">
    <location>
        <position position="133"/>
    </location>
    <ligand>
        <name>sn-glycerol 3-phosphate</name>
        <dbReference type="ChEBI" id="CHEBI:57597"/>
    </ligand>
</feature>
<feature type="binding site" evidence="1">
    <location>
        <position position="242"/>
    </location>
    <ligand>
        <name>glycerol</name>
        <dbReference type="ChEBI" id="CHEBI:17754"/>
    </ligand>
</feature>
<feature type="binding site" evidence="1">
    <location>
        <position position="242"/>
    </location>
    <ligand>
        <name>sn-glycerol 3-phosphate</name>
        <dbReference type="ChEBI" id="CHEBI:57597"/>
    </ligand>
</feature>
<feature type="binding site" evidence="1">
    <location>
        <position position="243"/>
    </location>
    <ligand>
        <name>glycerol</name>
        <dbReference type="ChEBI" id="CHEBI:17754"/>
    </ligand>
</feature>
<feature type="binding site" evidence="1">
    <location>
        <position position="264"/>
    </location>
    <ligand>
        <name>ADP</name>
        <dbReference type="ChEBI" id="CHEBI:456216"/>
    </ligand>
</feature>
<feature type="binding site" evidence="1">
    <location>
        <position position="264"/>
    </location>
    <ligand>
        <name>ATP</name>
        <dbReference type="ChEBI" id="CHEBI:30616"/>
    </ligand>
</feature>
<feature type="binding site" evidence="1">
    <location>
        <position position="307"/>
    </location>
    <ligand>
        <name>ADP</name>
        <dbReference type="ChEBI" id="CHEBI:456216"/>
    </ligand>
</feature>
<feature type="binding site" evidence="1">
    <location>
        <position position="307"/>
    </location>
    <ligand>
        <name>ATP</name>
        <dbReference type="ChEBI" id="CHEBI:30616"/>
    </ligand>
</feature>
<feature type="binding site" evidence="1">
    <location>
        <position position="311"/>
    </location>
    <ligand>
        <name>ATP</name>
        <dbReference type="ChEBI" id="CHEBI:30616"/>
    </ligand>
</feature>
<feature type="binding site" evidence="1">
    <location>
        <position position="411"/>
    </location>
    <ligand>
        <name>ADP</name>
        <dbReference type="ChEBI" id="CHEBI:456216"/>
    </ligand>
</feature>
<feature type="binding site" evidence="1">
    <location>
        <position position="411"/>
    </location>
    <ligand>
        <name>ATP</name>
        <dbReference type="ChEBI" id="CHEBI:30616"/>
    </ligand>
</feature>
<proteinExistence type="inferred from homology"/>
<comment type="function">
    <text evidence="1">Key enzyme in the regulation of glycerol uptake and metabolism. Catalyzes the phosphorylation of glycerol to yield sn-glycerol 3-phosphate.</text>
</comment>
<comment type="catalytic activity">
    <reaction evidence="1">
        <text>glycerol + ATP = sn-glycerol 3-phosphate + ADP + H(+)</text>
        <dbReference type="Rhea" id="RHEA:21644"/>
        <dbReference type="ChEBI" id="CHEBI:15378"/>
        <dbReference type="ChEBI" id="CHEBI:17754"/>
        <dbReference type="ChEBI" id="CHEBI:30616"/>
        <dbReference type="ChEBI" id="CHEBI:57597"/>
        <dbReference type="ChEBI" id="CHEBI:456216"/>
        <dbReference type="EC" id="2.7.1.30"/>
    </reaction>
</comment>
<comment type="activity regulation">
    <text evidence="1">Inhibited by fructose 1,6-bisphosphate (FBP).</text>
</comment>
<comment type="pathway">
    <text evidence="1">Polyol metabolism; glycerol degradation via glycerol kinase pathway; sn-glycerol 3-phosphate from glycerol: step 1/1.</text>
</comment>
<comment type="similarity">
    <text evidence="1">Belongs to the FGGY kinase family.</text>
</comment>
<evidence type="ECO:0000255" key="1">
    <source>
        <dbReference type="HAMAP-Rule" id="MF_00186"/>
    </source>
</evidence>
<protein>
    <recommendedName>
        <fullName evidence="1">Glycerol kinase</fullName>
        <ecNumber evidence="1">2.7.1.30</ecNumber>
    </recommendedName>
    <alternativeName>
        <fullName evidence="1">ATP:glycerol 3-phosphotransferase</fullName>
    </alternativeName>
    <alternativeName>
        <fullName evidence="1">Glycerokinase</fullName>
        <shortName evidence="1">GK</shortName>
    </alternativeName>
</protein>
<accession>A4YLX6</accession>
<name>GLPK_BRASO</name>
<reference key="1">
    <citation type="journal article" date="2007" name="Science">
        <title>Legumes symbioses: absence of nod genes in photosynthetic bradyrhizobia.</title>
        <authorList>
            <person name="Giraud E."/>
            <person name="Moulin L."/>
            <person name="Vallenet D."/>
            <person name="Barbe V."/>
            <person name="Cytryn E."/>
            <person name="Avarre J.-C."/>
            <person name="Jaubert M."/>
            <person name="Simon D."/>
            <person name="Cartieaux F."/>
            <person name="Prin Y."/>
            <person name="Bena G."/>
            <person name="Hannibal L."/>
            <person name="Fardoux J."/>
            <person name="Kojadinovic M."/>
            <person name="Vuillet L."/>
            <person name="Lajus A."/>
            <person name="Cruveiller S."/>
            <person name="Rouy Z."/>
            <person name="Mangenot S."/>
            <person name="Segurens B."/>
            <person name="Dossat C."/>
            <person name="Franck W.L."/>
            <person name="Chang W.-S."/>
            <person name="Saunders E."/>
            <person name="Bruce D."/>
            <person name="Richardson P."/>
            <person name="Normand P."/>
            <person name="Dreyfus B."/>
            <person name="Pignol D."/>
            <person name="Stacey G."/>
            <person name="Emerich D."/>
            <person name="Vermeglio A."/>
            <person name="Medigue C."/>
            <person name="Sadowsky M."/>
        </authorList>
    </citation>
    <scope>NUCLEOTIDE SEQUENCE [LARGE SCALE GENOMIC DNA]</scope>
    <source>
        <strain>ORS 278</strain>
    </source>
</reference>
<dbReference type="EC" id="2.7.1.30" evidence="1"/>
<dbReference type="EMBL" id="CU234118">
    <property type="protein sequence ID" value="CAL74902.1"/>
    <property type="molecule type" value="Genomic_DNA"/>
</dbReference>
<dbReference type="RefSeq" id="WP_011924153.1">
    <property type="nucleotide sequence ID" value="NC_009445.1"/>
</dbReference>
<dbReference type="SMR" id="A4YLX6"/>
<dbReference type="STRING" id="114615.BRADO0987"/>
<dbReference type="KEGG" id="bra:BRADO0987"/>
<dbReference type="eggNOG" id="COG0554">
    <property type="taxonomic scope" value="Bacteria"/>
</dbReference>
<dbReference type="HOGENOM" id="CLU_009281_2_3_5"/>
<dbReference type="OrthoDB" id="9805576at2"/>
<dbReference type="UniPathway" id="UPA00618">
    <property type="reaction ID" value="UER00672"/>
</dbReference>
<dbReference type="Proteomes" id="UP000001994">
    <property type="component" value="Chromosome"/>
</dbReference>
<dbReference type="GO" id="GO:0005829">
    <property type="term" value="C:cytosol"/>
    <property type="evidence" value="ECO:0007669"/>
    <property type="project" value="TreeGrafter"/>
</dbReference>
<dbReference type="GO" id="GO:0005524">
    <property type="term" value="F:ATP binding"/>
    <property type="evidence" value="ECO:0007669"/>
    <property type="project" value="UniProtKB-UniRule"/>
</dbReference>
<dbReference type="GO" id="GO:0004370">
    <property type="term" value="F:glycerol kinase activity"/>
    <property type="evidence" value="ECO:0000250"/>
    <property type="project" value="UniProtKB"/>
</dbReference>
<dbReference type="GO" id="GO:0019563">
    <property type="term" value="P:glycerol catabolic process"/>
    <property type="evidence" value="ECO:0007669"/>
    <property type="project" value="UniProtKB-UniRule"/>
</dbReference>
<dbReference type="GO" id="GO:0006071">
    <property type="term" value="P:glycerol metabolic process"/>
    <property type="evidence" value="ECO:0000250"/>
    <property type="project" value="UniProtKB"/>
</dbReference>
<dbReference type="GO" id="GO:0006072">
    <property type="term" value="P:glycerol-3-phosphate metabolic process"/>
    <property type="evidence" value="ECO:0007669"/>
    <property type="project" value="InterPro"/>
</dbReference>
<dbReference type="CDD" id="cd07786">
    <property type="entry name" value="FGGY_EcGK_like"/>
    <property type="match status" value="1"/>
</dbReference>
<dbReference type="FunFam" id="3.30.420.40:FF:000007">
    <property type="entry name" value="Glycerol kinase"/>
    <property type="match status" value="1"/>
</dbReference>
<dbReference type="FunFam" id="3.30.420.40:FF:000008">
    <property type="entry name" value="Glycerol kinase"/>
    <property type="match status" value="1"/>
</dbReference>
<dbReference type="Gene3D" id="3.30.420.40">
    <property type="match status" value="2"/>
</dbReference>
<dbReference type="HAMAP" id="MF_00186">
    <property type="entry name" value="Glycerol_kin"/>
    <property type="match status" value="1"/>
</dbReference>
<dbReference type="InterPro" id="IPR043129">
    <property type="entry name" value="ATPase_NBD"/>
</dbReference>
<dbReference type="InterPro" id="IPR000577">
    <property type="entry name" value="Carb_kinase_FGGY"/>
</dbReference>
<dbReference type="InterPro" id="IPR018483">
    <property type="entry name" value="Carb_kinase_FGGY_CS"/>
</dbReference>
<dbReference type="InterPro" id="IPR018485">
    <property type="entry name" value="FGGY_C"/>
</dbReference>
<dbReference type="InterPro" id="IPR018484">
    <property type="entry name" value="FGGY_N"/>
</dbReference>
<dbReference type="InterPro" id="IPR005999">
    <property type="entry name" value="Glycerol_kin"/>
</dbReference>
<dbReference type="NCBIfam" id="TIGR01311">
    <property type="entry name" value="glycerol_kin"/>
    <property type="match status" value="1"/>
</dbReference>
<dbReference type="NCBIfam" id="NF000756">
    <property type="entry name" value="PRK00047.1"/>
    <property type="match status" value="1"/>
</dbReference>
<dbReference type="PANTHER" id="PTHR10196:SF78">
    <property type="entry name" value="GLYCEROL KINASE"/>
    <property type="match status" value="1"/>
</dbReference>
<dbReference type="PANTHER" id="PTHR10196">
    <property type="entry name" value="SUGAR KINASE"/>
    <property type="match status" value="1"/>
</dbReference>
<dbReference type="Pfam" id="PF02782">
    <property type="entry name" value="FGGY_C"/>
    <property type="match status" value="1"/>
</dbReference>
<dbReference type="Pfam" id="PF00370">
    <property type="entry name" value="FGGY_N"/>
    <property type="match status" value="1"/>
</dbReference>
<dbReference type="PIRSF" id="PIRSF000538">
    <property type="entry name" value="GlpK"/>
    <property type="match status" value="1"/>
</dbReference>
<dbReference type="SUPFAM" id="SSF53067">
    <property type="entry name" value="Actin-like ATPase domain"/>
    <property type="match status" value="2"/>
</dbReference>
<dbReference type="PROSITE" id="PS00933">
    <property type="entry name" value="FGGY_KINASES_1"/>
    <property type="match status" value="1"/>
</dbReference>
<dbReference type="PROSITE" id="PS00445">
    <property type="entry name" value="FGGY_KINASES_2"/>
    <property type="match status" value="1"/>
</dbReference>
<gene>
    <name evidence="1" type="primary">glpK</name>
    <name type="ordered locus">BRADO0987</name>
</gene>
<keyword id="KW-0067">ATP-binding</keyword>
<keyword id="KW-0319">Glycerol metabolism</keyword>
<keyword id="KW-0418">Kinase</keyword>
<keyword id="KW-0547">Nucleotide-binding</keyword>
<keyword id="KW-1185">Reference proteome</keyword>
<keyword id="KW-0808">Transferase</keyword>
<organism>
    <name type="scientific">Bradyrhizobium sp. (strain ORS 278)</name>
    <dbReference type="NCBI Taxonomy" id="114615"/>
    <lineage>
        <taxon>Bacteria</taxon>
        <taxon>Pseudomonadati</taxon>
        <taxon>Pseudomonadota</taxon>
        <taxon>Alphaproteobacteria</taxon>
        <taxon>Hyphomicrobiales</taxon>
        <taxon>Nitrobacteraceae</taxon>
        <taxon>Bradyrhizobium</taxon>
    </lineage>
</organism>